<proteinExistence type="evidence at transcript level"/>
<protein>
    <recommendedName>
        <fullName>Probable protein phosphatase 2C 12</fullName>
        <shortName>AtPP2C12</shortName>
        <ecNumber>3.1.3.16</ecNumber>
    </recommendedName>
</protein>
<gene>
    <name type="ordered locus">At1g47380</name>
    <name type="ORF">T3F24.2</name>
</gene>
<name>P2C12_ARATH</name>
<comment type="catalytic activity">
    <reaction>
        <text>O-phospho-L-seryl-[protein] + H2O = L-seryl-[protein] + phosphate</text>
        <dbReference type="Rhea" id="RHEA:20629"/>
        <dbReference type="Rhea" id="RHEA-COMP:9863"/>
        <dbReference type="Rhea" id="RHEA-COMP:11604"/>
        <dbReference type="ChEBI" id="CHEBI:15377"/>
        <dbReference type="ChEBI" id="CHEBI:29999"/>
        <dbReference type="ChEBI" id="CHEBI:43474"/>
        <dbReference type="ChEBI" id="CHEBI:83421"/>
        <dbReference type="EC" id="3.1.3.16"/>
    </reaction>
</comment>
<comment type="catalytic activity">
    <reaction>
        <text>O-phospho-L-threonyl-[protein] + H2O = L-threonyl-[protein] + phosphate</text>
        <dbReference type="Rhea" id="RHEA:47004"/>
        <dbReference type="Rhea" id="RHEA-COMP:11060"/>
        <dbReference type="Rhea" id="RHEA-COMP:11605"/>
        <dbReference type="ChEBI" id="CHEBI:15377"/>
        <dbReference type="ChEBI" id="CHEBI:30013"/>
        <dbReference type="ChEBI" id="CHEBI:43474"/>
        <dbReference type="ChEBI" id="CHEBI:61977"/>
        <dbReference type="EC" id="3.1.3.16"/>
    </reaction>
</comment>
<comment type="cofactor">
    <cofactor evidence="1">
        <name>Mg(2+)</name>
        <dbReference type="ChEBI" id="CHEBI:18420"/>
    </cofactor>
    <cofactor evidence="1">
        <name>Mn(2+)</name>
        <dbReference type="ChEBI" id="CHEBI:29035"/>
    </cofactor>
    <text evidence="1">Binds 2 magnesium or manganese ions per subunit.</text>
</comment>
<comment type="similarity">
    <text evidence="4">Belongs to the PP2C family.</text>
</comment>
<evidence type="ECO:0000250" key="1"/>
<evidence type="ECO:0000255" key="2">
    <source>
        <dbReference type="PROSITE-ProRule" id="PRU01082"/>
    </source>
</evidence>
<evidence type="ECO:0000256" key="3">
    <source>
        <dbReference type="SAM" id="MobiDB-lite"/>
    </source>
</evidence>
<evidence type="ECO:0000305" key="4"/>
<sequence>MSTKGEHHTVPLSVLLKRESANEKIDNPELIHGQHNQSKKGEDFTLVKTECQRVMGDGVTTFSVFGLFDGHNGSAAAIYTKENLLNNVLAAIPSDLNRDEWVAALPRALVAGFVKTDKDFQERARTSGTTVTFVIVEGWVVSVASVGDSRCILEPAEGGVYYLSADHRLEINEEERDRVTASGGEVGRLNTGGGTEIGPLRCWPGGLCLSRSIGDLDVGEYIVPVPYVKQVKLSSAGGRLIISSDGVWDAISAEEALDCCRGLPPESSAEHIVKEAVGKKGIRDDTTCIVVDILPLEKPAASVPPPKKQGKGMLKSMFKRKTSDSSSNIEKEYAEPDVVEELFEEGSAMLSERLDTKYPLCNMFKLFMCAVCQVEVKPGEGVSIHAGSDNCRKLRPWDGPFLCASCQDKKDAMEGKRSSGDRHSSESD</sequence>
<accession>Q9FX08</accession>
<accession>Q949V4</accession>
<keyword id="KW-0378">Hydrolase</keyword>
<keyword id="KW-0460">Magnesium</keyword>
<keyword id="KW-0464">Manganese</keyword>
<keyword id="KW-0479">Metal-binding</keyword>
<keyword id="KW-0904">Protein phosphatase</keyword>
<keyword id="KW-1185">Reference proteome</keyword>
<feature type="chain" id="PRO_0000367943" description="Probable protein phosphatase 2C 12">
    <location>
        <begin position="1"/>
        <end position="428"/>
    </location>
</feature>
<feature type="domain" description="PPM-type phosphatase" evidence="2">
    <location>
        <begin position="24"/>
        <end position="293"/>
    </location>
</feature>
<feature type="region of interest" description="Disordered" evidence="3">
    <location>
        <begin position="301"/>
        <end position="331"/>
    </location>
</feature>
<feature type="binding site" evidence="1">
    <location>
        <position position="69"/>
    </location>
    <ligand>
        <name>Mn(2+)</name>
        <dbReference type="ChEBI" id="CHEBI:29035"/>
        <label>1</label>
    </ligand>
</feature>
<feature type="binding site" evidence="1">
    <location>
        <position position="69"/>
    </location>
    <ligand>
        <name>Mn(2+)</name>
        <dbReference type="ChEBI" id="CHEBI:29035"/>
        <label>2</label>
    </ligand>
</feature>
<feature type="binding site" evidence="1">
    <location>
        <position position="70"/>
    </location>
    <ligand>
        <name>Mn(2+)</name>
        <dbReference type="ChEBI" id="CHEBI:29035"/>
        <label>1</label>
    </ligand>
</feature>
<feature type="binding site" evidence="1">
    <location>
        <position position="245"/>
    </location>
    <ligand>
        <name>Mn(2+)</name>
        <dbReference type="ChEBI" id="CHEBI:29035"/>
        <label>2</label>
    </ligand>
</feature>
<feature type="binding site" evidence="1">
    <location>
        <position position="284"/>
    </location>
    <ligand>
        <name>Mn(2+)</name>
        <dbReference type="ChEBI" id="CHEBI:29035"/>
        <label>2</label>
    </ligand>
</feature>
<feature type="sequence conflict" description="In Ref. 3; AAK92805." evidence="4" ref="3">
    <original>Q</original>
    <variation>R</variation>
    <location>
        <position position="121"/>
    </location>
</feature>
<reference key="1">
    <citation type="journal article" date="2000" name="Nature">
        <title>Sequence and analysis of chromosome 1 of the plant Arabidopsis thaliana.</title>
        <authorList>
            <person name="Theologis A."/>
            <person name="Ecker J.R."/>
            <person name="Palm C.J."/>
            <person name="Federspiel N.A."/>
            <person name="Kaul S."/>
            <person name="White O."/>
            <person name="Alonso J."/>
            <person name="Altafi H."/>
            <person name="Araujo R."/>
            <person name="Bowman C.L."/>
            <person name="Brooks S.Y."/>
            <person name="Buehler E."/>
            <person name="Chan A."/>
            <person name="Chao Q."/>
            <person name="Chen H."/>
            <person name="Cheuk R.F."/>
            <person name="Chin C.W."/>
            <person name="Chung M.K."/>
            <person name="Conn L."/>
            <person name="Conway A.B."/>
            <person name="Conway A.R."/>
            <person name="Creasy T.H."/>
            <person name="Dewar K."/>
            <person name="Dunn P."/>
            <person name="Etgu P."/>
            <person name="Feldblyum T.V."/>
            <person name="Feng J.-D."/>
            <person name="Fong B."/>
            <person name="Fujii C.Y."/>
            <person name="Gill J.E."/>
            <person name="Goldsmith A.D."/>
            <person name="Haas B."/>
            <person name="Hansen N.F."/>
            <person name="Hughes B."/>
            <person name="Huizar L."/>
            <person name="Hunter J.L."/>
            <person name="Jenkins J."/>
            <person name="Johnson-Hopson C."/>
            <person name="Khan S."/>
            <person name="Khaykin E."/>
            <person name="Kim C.J."/>
            <person name="Koo H.L."/>
            <person name="Kremenetskaia I."/>
            <person name="Kurtz D.B."/>
            <person name="Kwan A."/>
            <person name="Lam B."/>
            <person name="Langin-Hooper S."/>
            <person name="Lee A."/>
            <person name="Lee J.M."/>
            <person name="Lenz C.A."/>
            <person name="Li J.H."/>
            <person name="Li Y.-P."/>
            <person name="Lin X."/>
            <person name="Liu S.X."/>
            <person name="Liu Z.A."/>
            <person name="Luros J.S."/>
            <person name="Maiti R."/>
            <person name="Marziali A."/>
            <person name="Militscher J."/>
            <person name="Miranda M."/>
            <person name="Nguyen M."/>
            <person name="Nierman W.C."/>
            <person name="Osborne B.I."/>
            <person name="Pai G."/>
            <person name="Peterson J."/>
            <person name="Pham P.K."/>
            <person name="Rizzo M."/>
            <person name="Rooney T."/>
            <person name="Rowley D."/>
            <person name="Sakano H."/>
            <person name="Salzberg S.L."/>
            <person name="Schwartz J.R."/>
            <person name="Shinn P."/>
            <person name="Southwick A.M."/>
            <person name="Sun H."/>
            <person name="Tallon L.J."/>
            <person name="Tambunga G."/>
            <person name="Toriumi M.J."/>
            <person name="Town C.D."/>
            <person name="Utterback T."/>
            <person name="Van Aken S."/>
            <person name="Vaysberg M."/>
            <person name="Vysotskaia V.S."/>
            <person name="Walker M."/>
            <person name="Wu D."/>
            <person name="Yu G."/>
            <person name="Fraser C.M."/>
            <person name="Venter J.C."/>
            <person name="Davis R.W."/>
        </authorList>
    </citation>
    <scope>NUCLEOTIDE SEQUENCE [LARGE SCALE GENOMIC DNA]</scope>
    <source>
        <strain>cv. Columbia</strain>
    </source>
</reference>
<reference key="2">
    <citation type="journal article" date="2017" name="Plant J.">
        <title>Araport11: a complete reannotation of the Arabidopsis thaliana reference genome.</title>
        <authorList>
            <person name="Cheng C.Y."/>
            <person name="Krishnakumar V."/>
            <person name="Chan A.P."/>
            <person name="Thibaud-Nissen F."/>
            <person name="Schobel S."/>
            <person name="Town C.D."/>
        </authorList>
    </citation>
    <scope>GENOME REANNOTATION</scope>
    <source>
        <strain>cv. Columbia</strain>
    </source>
</reference>
<reference key="3">
    <citation type="journal article" date="2003" name="Science">
        <title>Empirical analysis of transcriptional activity in the Arabidopsis genome.</title>
        <authorList>
            <person name="Yamada K."/>
            <person name="Lim J."/>
            <person name="Dale J.M."/>
            <person name="Chen H."/>
            <person name="Shinn P."/>
            <person name="Palm C.J."/>
            <person name="Southwick A.M."/>
            <person name="Wu H.C."/>
            <person name="Kim C.J."/>
            <person name="Nguyen M."/>
            <person name="Pham P.K."/>
            <person name="Cheuk R.F."/>
            <person name="Karlin-Newmann G."/>
            <person name="Liu S.X."/>
            <person name="Lam B."/>
            <person name="Sakano H."/>
            <person name="Wu T."/>
            <person name="Yu G."/>
            <person name="Miranda M."/>
            <person name="Quach H.L."/>
            <person name="Tripp M."/>
            <person name="Chang C.H."/>
            <person name="Lee J.M."/>
            <person name="Toriumi M.J."/>
            <person name="Chan M.M."/>
            <person name="Tang C.C."/>
            <person name="Onodera C.S."/>
            <person name="Deng J.M."/>
            <person name="Akiyama K."/>
            <person name="Ansari Y."/>
            <person name="Arakawa T."/>
            <person name="Banh J."/>
            <person name="Banno F."/>
            <person name="Bowser L."/>
            <person name="Brooks S.Y."/>
            <person name="Carninci P."/>
            <person name="Chao Q."/>
            <person name="Choy N."/>
            <person name="Enju A."/>
            <person name="Goldsmith A.D."/>
            <person name="Gurjal M."/>
            <person name="Hansen N.F."/>
            <person name="Hayashizaki Y."/>
            <person name="Johnson-Hopson C."/>
            <person name="Hsuan V.W."/>
            <person name="Iida K."/>
            <person name="Karnes M."/>
            <person name="Khan S."/>
            <person name="Koesema E."/>
            <person name="Ishida J."/>
            <person name="Jiang P.X."/>
            <person name="Jones T."/>
            <person name="Kawai J."/>
            <person name="Kamiya A."/>
            <person name="Meyers C."/>
            <person name="Nakajima M."/>
            <person name="Narusaka M."/>
            <person name="Seki M."/>
            <person name="Sakurai T."/>
            <person name="Satou M."/>
            <person name="Tamse R."/>
            <person name="Vaysberg M."/>
            <person name="Wallender E.K."/>
            <person name="Wong C."/>
            <person name="Yamamura Y."/>
            <person name="Yuan S."/>
            <person name="Shinozaki K."/>
            <person name="Davis R.W."/>
            <person name="Theologis A."/>
            <person name="Ecker J.R."/>
        </authorList>
    </citation>
    <scope>NUCLEOTIDE SEQUENCE [LARGE SCALE MRNA]</scope>
    <source>
        <strain>cv. Columbia</strain>
    </source>
</reference>
<reference key="4">
    <citation type="journal article" date="2008" name="BMC Genomics">
        <title>Genome-wide and expression analysis of protein phosphatase 2C in rice and Arabidopsis.</title>
        <authorList>
            <person name="Xue T."/>
            <person name="Wang D."/>
            <person name="Zhang S."/>
            <person name="Ehlting J."/>
            <person name="Ni F."/>
            <person name="Jacab S."/>
            <person name="Zheng C."/>
            <person name="Zhong Y."/>
        </authorList>
    </citation>
    <scope>GENE FAMILY</scope>
    <scope>NOMENCLATURE</scope>
</reference>
<dbReference type="EC" id="3.1.3.16"/>
<dbReference type="EMBL" id="AC015449">
    <property type="protein sequence ID" value="AAG11427.1"/>
    <property type="molecule type" value="Genomic_DNA"/>
</dbReference>
<dbReference type="EMBL" id="CP002684">
    <property type="protein sequence ID" value="AEE32161.1"/>
    <property type="molecule type" value="Genomic_DNA"/>
</dbReference>
<dbReference type="EMBL" id="AY050868">
    <property type="protein sequence ID" value="AAK92805.1"/>
    <property type="molecule type" value="mRNA"/>
</dbReference>
<dbReference type="EMBL" id="AY150472">
    <property type="protein sequence ID" value="AAN12997.1"/>
    <property type="molecule type" value="mRNA"/>
</dbReference>
<dbReference type="PIR" id="E96514">
    <property type="entry name" value="E96514"/>
</dbReference>
<dbReference type="RefSeq" id="NP_564504.1">
    <property type="nucleotide sequence ID" value="NM_103632.3"/>
</dbReference>
<dbReference type="SMR" id="Q9FX08"/>
<dbReference type="BioGRID" id="26366">
    <property type="interactions" value="2"/>
</dbReference>
<dbReference type="FunCoup" id="Q9FX08">
    <property type="interactions" value="624"/>
</dbReference>
<dbReference type="iPTMnet" id="Q9FX08"/>
<dbReference type="PaxDb" id="3702-AT1G47380.1"/>
<dbReference type="ProteomicsDB" id="248791"/>
<dbReference type="EnsemblPlants" id="AT1G47380.1">
    <property type="protein sequence ID" value="AT1G47380.1"/>
    <property type="gene ID" value="AT1G47380"/>
</dbReference>
<dbReference type="GeneID" id="841141"/>
<dbReference type="Gramene" id="AT1G47380.1">
    <property type="protein sequence ID" value="AT1G47380.1"/>
    <property type="gene ID" value="AT1G47380"/>
</dbReference>
<dbReference type="KEGG" id="ath:AT1G47380"/>
<dbReference type="Araport" id="AT1G47380"/>
<dbReference type="TAIR" id="AT1G47380"/>
<dbReference type="eggNOG" id="KOG0698">
    <property type="taxonomic scope" value="Eukaryota"/>
</dbReference>
<dbReference type="HOGENOM" id="CLU_013173_3_1_1"/>
<dbReference type="InParanoid" id="Q9FX08"/>
<dbReference type="OMA" id="HLTSMNA"/>
<dbReference type="OrthoDB" id="10264738at2759"/>
<dbReference type="PhylomeDB" id="Q9FX08"/>
<dbReference type="PRO" id="PR:Q9FX08"/>
<dbReference type="Proteomes" id="UP000006548">
    <property type="component" value="Chromosome 1"/>
</dbReference>
<dbReference type="ExpressionAtlas" id="Q9FX08">
    <property type="expression patterns" value="baseline and differential"/>
</dbReference>
<dbReference type="GO" id="GO:0046872">
    <property type="term" value="F:metal ion binding"/>
    <property type="evidence" value="ECO:0007669"/>
    <property type="project" value="UniProtKB-KW"/>
</dbReference>
<dbReference type="GO" id="GO:0004722">
    <property type="term" value="F:protein serine/threonine phosphatase activity"/>
    <property type="evidence" value="ECO:0007669"/>
    <property type="project" value="UniProtKB-EC"/>
</dbReference>
<dbReference type="CDD" id="cd00143">
    <property type="entry name" value="PP2Cc"/>
    <property type="match status" value="1"/>
</dbReference>
<dbReference type="FunFam" id="3.60.40.10:FF:000022">
    <property type="entry name" value="probable protein phosphatase 2C 12"/>
    <property type="match status" value="1"/>
</dbReference>
<dbReference type="Gene3D" id="3.60.40.10">
    <property type="entry name" value="PPM-type phosphatase domain"/>
    <property type="match status" value="1"/>
</dbReference>
<dbReference type="InterPro" id="IPR015655">
    <property type="entry name" value="PP2C"/>
</dbReference>
<dbReference type="InterPro" id="IPR036457">
    <property type="entry name" value="PPM-type-like_dom_sf"/>
</dbReference>
<dbReference type="InterPro" id="IPR001932">
    <property type="entry name" value="PPM-type_phosphatase-like_dom"/>
</dbReference>
<dbReference type="PANTHER" id="PTHR47992">
    <property type="entry name" value="PROTEIN PHOSPHATASE"/>
    <property type="match status" value="1"/>
</dbReference>
<dbReference type="Pfam" id="PF00481">
    <property type="entry name" value="PP2C"/>
    <property type="match status" value="1"/>
</dbReference>
<dbReference type="SMART" id="SM00331">
    <property type="entry name" value="PP2C_SIG"/>
    <property type="match status" value="1"/>
</dbReference>
<dbReference type="SMART" id="SM00332">
    <property type="entry name" value="PP2Cc"/>
    <property type="match status" value="1"/>
</dbReference>
<dbReference type="SUPFAM" id="SSF81606">
    <property type="entry name" value="PP2C-like"/>
    <property type="match status" value="1"/>
</dbReference>
<dbReference type="PROSITE" id="PS51746">
    <property type="entry name" value="PPM_2"/>
    <property type="match status" value="1"/>
</dbReference>
<organism>
    <name type="scientific">Arabidopsis thaliana</name>
    <name type="common">Mouse-ear cress</name>
    <dbReference type="NCBI Taxonomy" id="3702"/>
    <lineage>
        <taxon>Eukaryota</taxon>
        <taxon>Viridiplantae</taxon>
        <taxon>Streptophyta</taxon>
        <taxon>Embryophyta</taxon>
        <taxon>Tracheophyta</taxon>
        <taxon>Spermatophyta</taxon>
        <taxon>Magnoliopsida</taxon>
        <taxon>eudicotyledons</taxon>
        <taxon>Gunneridae</taxon>
        <taxon>Pentapetalae</taxon>
        <taxon>rosids</taxon>
        <taxon>malvids</taxon>
        <taxon>Brassicales</taxon>
        <taxon>Brassicaceae</taxon>
        <taxon>Camelineae</taxon>
        <taxon>Arabidopsis</taxon>
    </lineage>
</organism>